<comment type="function">
    <text evidence="1">Allows the formation of correctly charged Gln-tRNA(Gln) through the transamidation of misacylated Glu-tRNA(Gln) in the mitochondria. The reaction takes place in the presence of glutamine and ATP through an activated gamma-phospho-Glu-tRNA(Gln).</text>
</comment>
<comment type="catalytic activity">
    <reaction evidence="1">
        <text>L-glutamyl-tRNA(Gln) + L-glutamine + ATP + H2O = L-glutaminyl-tRNA(Gln) + L-glutamate + ADP + phosphate + H(+)</text>
        <dbReference type="Rhea" id="RHEA:17521"/>
        <dbReference type="Rhea" id="RHEA-COMP:9681"/>
        <dbReference type="Rhea" id="RHEA-COMP:9684"/>
        <dbReference type="ChEBI" id="CHEBI:15377"/>
        <dbReference type="ChEBI" id="CHEBI:15378"/>
        <dbReference type="ChEBI" id="CHEBI:29985"/>
        <dbReference type="ChEBI" id="CHEBI:30616"/>
        <dbReference type="ChEBI" id="CHEBI:43474"/>
        <dbReference type="ChEBI" id="CHEBI:58359"/>
        <dbReference type="ChEBI" id="CHEBI:78520"/>
        <dbReference type="ChEBI" id="CHEBI:78521"/>
        <dbReference type="ChEBI" id="CHEBI:456216"/>
        <dbReference type="EC" id="6.3.5.7"/>
    </reaction>
</comment>
<comment type="subunit">
    <text evidence="1">Subunit of the heterotrimeric GatCAB amidotransferase (AdT) complex, composed of A, B and C subunits.</text>
</comment>
<comment type="subcellular location">
    <subcellularLocation>
        <location evidence="1">Mitochondrion</location>
    </subcellularLocation>
</comment>
<comment type="similarity">
    <text evidence="1">Belongs to the amidase family. GatA subfamily.</text>
</comment>
<dbReference type="EC" id="6.3.5.7" evidence="1"/>
<dbReference type="EMBL" id="CM002236">
    <property type="protein sequence ID" value="EAA36564.2"/>
    <property type="molecule type" value="Genomic_DNA"/>
</dbReference>
<dbReference type="RefSeq" id="XP_965800.2">
    <property type="nucleotide sequence ID" value="XM_960707.2"/>
</dbReference>
<dbReference type="SMR" id="Q7SHZ2"/>
<dbReference type="FunCoup" id="Q7SHZ2">
    <property type="interactions" value="337"/>
</dbReference>
<dbReference type="STRING" id="367110.Q7SHZ2"/>
<dbReference type="PaxDb" id="5141-EFNCRP00000000714"/>
<dbReference type="EnsemblFungi" id="EAA36564">
    <property type="protein sequence ID" value="EAA36564"/>
    <property type="gene ID" value="NCU00660"/>
</dbReference>
<dbReference type="GeneID" id="3881925"/>
<dbReference type="KEGG" id="ncr:NCU00660"/>
<dbReference type="VEuPathDB" id="FungiDB:NCU00660"/>
<dbReference type="HOGENOM" id="CLU_009600_7_6_1"/>
<dbReference type="InParanoid" id="Q7SHZ2"/>
<dbReference type="OrthoDB" id="421993at2759"/>
<dbReference type="Proteomes" id="UP000001805">
    <property type="component" value="Chromosome 1, Linkage Group I"/>
</dbReference>
<dbReference type="GO" id="GO:0030956">
    <property type="term" value="C:glutamyl-tRNA(Gln) amidotransferase complex"/>
    <property type="evidence" value="ECO:0000318"/>
    <property type="project" value="GO_Central"/>
</dbReference>
<dbReference type="GO" id="GO:0005739">
    <property type="term" value="C:mitochondrion"/>
    <property type="evidence" value="ECO:0000318"/>
    <property type="project" value="GO_Central"/>
</dbReference>
<dbReference type="GO" id="GO:0005524">
    <property type="term" value="F:ATP binding"/>
    <property type="evidence" value="ECO:0007669"/>
    <property type="project" value="UniProtKB-KW"/>
</dbReference>
<dbReference type="GO" id="GO:0050567">
    <property type="term" value="F:glutaminyl-tRNA synthase (glutamine-hydrolyzing) activity"/>
    <property type="evidence" value="ECO:0000318"/>
    <property type="project" value="GO_Central"/>
</dbReference>
<dbReference type="GO" id="GO:0070681">
    <property type="term" value="P:glutaminyl-tRNAGln biosynthesis via transamidation"/>
    <property type="evidence" value="ECO:0000318"/>
    <property type="project" value="GO_Central"/>
</dbReference>
<dbReference type="GO" id="GO:0032543">
    <property type="term" value="P:mitochondrial translation"/>
    <property type="evidence" value="ECO:0000318"/>
    <property type="project" value="GO_Central"/>
</dbReference>
<dbReference type="Gene3D" id="3.90.1300.10">
    <property type="entry name" value="Amidase signature (AS) domain"/>
    <property type="match status" value="1"/>
</dbReference>
<dbReference type="HAMAP" id="MF_00120">
    <property type="entry name" value="GatA"/>
    <property type="match status" value="1"/>
</dbReference>
<dbReference type="InterPro" id="IPR000120">
    <property type="entry name" value="Amidase"/>
</dbReference>
<dbReference type="InterPro" id="IPR020556">
    <property type="entry name" value="Amidase_CS"/>
</dbReference>
<dbReference type="InterPro" id="IPR023631">
    <property type="entry name" value="Amidase_dom"/>
</dbReference>
<dbReference type="InterPro" id="IPR036928">
    <property type="entry name" value="AS_sf"/>
</dbReference>
<dbReference type="InterPro" id="IPR004412">
    <property type="entry name" value="GatA"/>
</dbReference>
<dbReference type="PANTHER" id="PTHR11895:SF7">
    <property type="entry name" value="GLUTAMYL-TRNA(GLN) AMIDOTRANSFERASE SUBUNIT A, MITOCHONDRIAL"/>
    <property type="match status" value="1"/>
</dbReference>
<dbReference type="PANTHER" id="PTHR11895">
    <property type="entry name" value="TRANSAMIDASE"/>
    <property type="match status" value="1"/>
</dbReference>
<dbReference type="Pfam" id="PF01425">
    <property type="entry name" value="Amidase"/>
    <property type="match status" value="1"/>
</dbReference>
<dbReference type="SUPFAM" id="SSF75304">
    <property type="entry name" value="Amidase signature (AS) enzymes"/>
    <property type="match status" value="1"/>
</dbReference>
<dbReference type="PROSITE" id="PS00571">
    <property type="entry name" value="AMIDASES"/>
    <property type="match status" value="1"/>
</dbReference>
<reference key="1">
    <citation type="journal article" date="2003" name="Nature">
        <title>The genome sequence of the filamentous fungus Neurospora crassa.</title>
        <authorList>
            <person name="Galagan J.E."/>
            <person name="Calvo S.E."/>
            <person name="Borkovich K.A."/>
            <person name="Selker E.U."/>
            <person name="Read N.D."/>
            <person name="Jaffe D.B."/>
            <person name="FitzHugh W."/>
            <person name="Ma L.-J."/>
            <person name="Smirnov S."/>
            <person name="Purcell S."/>
            <person name="Rehman B."/>
            <person name="Elkins T."/>
            <person name="Engels R."/>
            <person name="Wang S."/>
            <person name="Nielsen C.B."/>
            <person name="Butler J."/>
            <person name="Endrizzi M."/>
            <person name="Qui D."/>
            <person name="Ianakiev P."/>
            <person name="Bell-Pedersen D."/>
            <person name="Nelson M.A."/>
            <person name="Werner-Washburne M."/>
            <person name="Selitrennikoff C.P."/>
            <person name="Kinsey J.A."/>
            <person name="Braun E.L."/>
            <person name="Zelter A."/>
            <person name="Schulte U."/>
            <person name="Kothe G.O."/>
            <person name="Jedd G."/>
            <person name="Mewes H.-W."/>
            <person name="Staben C."/>
            <person name="Marcotte E."/>
            <person name="Greenberg D."/>
            <person name="Roy A."/>
            <person name="Foley K."/>
            <person name="Naylor J."/>
            <person name="Stange-Thomann N."/>
            <person name="Barrett R."/>
            <person name="Gnerre S."/>
            <person name="Kamal M."/>
            <person name="Kamvysselis M."/>
            <person name="Mauceli E.W."/>
            <person name="Bielke C."/>
            <person name="Rudd S."/>
            <person name="Frishman D."/>
            <person name="Krystofova S."/>
            <person name="Rasmussen C."/>
            <person name="Metzenberg R.L."/>
            <person name="Perkins D.D."/>
            <person name="Kroken S."/>
            <person name="Cogoni C."/>
            <person name="Macino G."/>
            <person name="Catcheside D.E.A."/>
            <person name="Li W."/>
            <person name="Pratt R.J."/>
            <person name="Osmani S.A."/>
            <person name="DeSouza C.P.C."/>
            <person name="Glass N.L."/>
            <person name="Orbach M.J."/>
            <person name="Berglund J.A."/>
            <person name="Voelker R."/>
            <person name="Yarden O."/>
            <person name="Plamann M."/>
            <person name="Seiler S."/>
            <person name="Dunlap J.C."/>
            <person name="Radford A."/>
            <person name="Aramayo R."/>
            <person name="Natvig D.O."/>
            <person name="Alex L.A."/>
            <person name="Mannhaupt G."/>
            <person name="Ebbole D.J."/>
            <person name="Freitag M."/>
            <person name="Paulsen I."/>
            <person name="Sachs M.S."/>
            <person name="Lander E.S."/>
            <person name="Nusbaum C."/>
            <person name="Birren B.W."/>
        </authorList>
    </citation>
    <scope>NUCLEOTIDE SEQUENCE [LARGE SCALE GENOMIC DNA]</scope>
    <source>
        <strain>ATCC 24698 / 74-OR23-1A / CBS 708.71 / DSM 1257 / FGSC 987</strain>
    </source>
</reference>
<proteinExistence type="inferred from homology"/>
<gene>
    <name type="ORF">NCU00660</name>
</gene>
<evidence type="ECO:0000255" key="1">
    <source>
        <dbReference type="HAMAP-Rule" id="MF_03150"/>
    </source>
</evidence>
<feature type="chain" id="PRO_0000413356" description="Glutamyl-tRNA(Gln) amidotransferase subunit A, mitochondrial">
    <location>
        <begin position="1"/>
        <end position="542"/>
    </location>
</feature>
<feature type="active site" description="Charge relay system" evidence="1">
    <location>
        <position position="55"/>
    </location>
</feature>
<feature type="active site" description="Charge relay system" evidence="1">
    <location>
        <position position="143"/>
    </location>
</feature>
<feature type="active site" description="Acyl-ester intermediate" evidence="1">
    <location>
        <position position="167"/>
    </location>
</feature>
<accession>Q7SHZ2</accession>
<keyword id="KW-0067">ATP-binding</keyword>
<keyword id="KW-0436">Ligase</keyword>
<keyword id="KW-0496">Mitochondrion</keyword>
<keyword id="KW-0547">Nucleotide-binding</keyword>
<keyword id="KW-0648">Protein biosynthesis</keyword>
<keyword id="KW-1185">Reference proteome</keyword>
<organism>
    <name type="scientific">Neurospora crassa (strain ATCC 24698 / 74-OR23-1A / CBS 708.71 / DSM 1257 / FGSC 987)</name>
    <dbReference type="NCBI Taxonomy" id="367110"/>
    <lineage>
        <taxon>Eukaryota</taxon>
        <taxon>Fungi</taxon>
        <taxon>Dikarya</taxon>
        <taxon>Ascomycota</taxon>
        <taxon>Pezizomycotina</taxon>
        <taxon>Sordariomycetes</taxon>
        <taxon>Sordariomycetidae</taxon>
        <taxon>Sordariales</taxon>
        <taxon>Sordariaceae</taxon>
        <taxon>Neurospora</taxon>
    </lineage>
</organism>
<protein>
    <recommendedName>
        <fullName evidence="1">Glutamyl-tRNA(Gln) amidotransferase subunit A, mitochondrial</fullName>
        <shortName evidence="1">Glu-AdT subunit A</shortName>
        <ecNumber evidence="1">6.3.5.7</ecNumber>
    </recommendedName>
</protein>
<sequence length="542" mass="58740">MSARIGRLRGLCLRHVSSTRQTSPIQRRSLNQFISRVQQHDQPALEQRQFRLAVKDNIATVSPNSEEETPLTTTCGSNFLANYRSPFEATIVSQLRSRGALLVGKTNLDEFGMGSHSVHTAFGAVAQEGEHEQQAVKHSAGGSSGGSAVAVATGEADIALGTDTGGSVRLPAGYTGVVGFKPSYGMLSRYGVVPYANSLDTVGLLAKEVRPIAELILGGADKVTRGLWAEHDPLDPTSLSHGARRRCASQRDCYTGPLPKDPYPLKNLKFGLPLEYNITELSPSIRHSWSAAAAKLQSLGARLVPVSLPSTRHALSAYYVIAPAEASSNLAKYDGIRYGTRFTSPTESDAAISEGPEGREEEEEGILYARARTAGFGDEVKRRILLGAYTLSSAAMDNYFLKAQKVRRLVRRDFNRVFALPNPLLDKPERFELSELPETVGLEDKWGPTEVDFLLCPTAPTTAPRLDEVLSEEEKDPVSAYMNDVFTVPASLAGLPAISVPMRVEDKEGAGMAGLQLIGQYWDDARLLAVAETVADVVREEL</sequence>
<name>GATA_NEUCR</name>